<dbReference type="EMBL" id="U66480">
    <property type="protein sequence ID" value="AAB41098.1"/>
    <property type="molecule type" value="Genomic_DNA"/>
</dbReference>
<dbReference type="EMBL" id="AL009126">
    <property type="protein sequence ID" value="CAB13649.2"/>
    <property type="molecule type" value="Genomic_DNA"/>
</dbReference>
<dbReference type="PIR" id="G69888">
    <property type="entry name" value="G69888"/>
</dbReference>
<dbReference type="RefSeq" id="NP_389648.2">
    <property type="nucleotide sequence ID" value="NC_000964.3"/>
</dbReference>
<dbReference type="RefSeq" id="WP_003245293.1">
    <property type="nucleotide sequence ID" value="NZ_OZ025638.1"/>
</dbReference>
<dbReference type="FunCoup" id="P94495">
    <property type="interactions" value="17"/>
</dbReference>
<dbReference type="STRING" id="224308.BSU17650"/>
<dbReference type="PaxDb" id="224308-BSU17650"/>
<dbReference type="EnsemblBacteria" id="CAB13649">
    <property type="protein sequence ID" value="CAB13649"/>
    <property type="gene ID" value="BSU_17650"/>
</dbReference>
<dbReference type="GeneID" id="939573"/>
<dbReference type="KEGG" id="bsu:BSU17650"/>
<dbReference type="PATRIC" id="fig|224308.179.peg.1916"/>
<dbReference type="eggNOG" id="ENOG5032S02">
    <property type="taxonomic scope" value="Bacteria"/>
</dbReference>
<dbReference type="InParanoid" id="P94495"/>
<dbReference type="OrthoDB" id="2625810at2"/>
<dbReference type="BioCyc" id="BSUB:BSU17650-MONOMER"/>
<dbReference type="Proteomes" id="UP000001570">
    <property type="component" value="Chromosome"/>
</dbReference>
<dbReference type="InterPro" id="IPR020216">
    <property type="entry name" value="Uncharacterised_YncE"/>
</dbReference>
<dbReference type="Pfam" id="PF10903">
    <property type="entry name" value="DUF2691"/>
    <property type="match status" value="1"/>
</dbReference>
<protein>
    <recommendedName>
        <fullName>Uncharacterized protein YncE</fullName>
    </recommendedName>
</protein>
<gene>
    <name type="primary">yncE</name>
    <name type="ordered locus">BSU17650</name>
</gene>
<keyword id="KW-1185">Reference proteome</keyword>
<name>YNCE_BACSU</name>
<evidence type="ECO:0000305" key="1"/>
<proteinExistence type="predicted"/>
<reference key="1">
    <citation type="submission" date="1997-02" db="EMBL/GenBank/DDBJ databases">
        <title>Sequencing of a 26 kb region of the Bacillus subtilis genome downstream of spoVJ.</title>
        <authorList>
            <person name="Borchert S."/>
            <person name="Klein C."/>
            <person name="Piksa B."/>
            <person name="Hammelmann M."/>
            <person name="Entian K.-D."/>
        </authorList>
    </citation>
    <scope>NUCLEOTIDE SEQUENCE [GENOMIC DNA]</scope>
</reference>
<reference key="2">
    <citation type="journal article" date="1997" name="Nature">
        <title>The complete genome sequence of the Gram-positive bacterium Bacillus subtilis.</title>
        <authorList>
            <person name="Kunst F."/>
            <person name="Ogasawara N."/>
            <person name="Moszer I."/>
            <person name="Albertini A.M."/>
            <person name="Alloni G."/>
            <person name="Azevedo V."/>
            <person name="Bertero M.G."/>
            <person name="Bessieres P."/>
            <person name="Bolotin A."/>
            <person name="Borchert S."/>
            <person name="Borriss R."/>
            <person name="Boursier L."/>
            <person name="Brans A."/>
            <person name="Braun M."/>
            <person name="Brignell S.C."/>
            <person name="Bron S."/>
            <person name="Brouillet S."/>
            <person name="Bruschi C.V."/>
            <person name="Caldwell B."/>
            <person name="Capuano V."/>
            <person name="Carter N.M."/>
            <person name="Choi S.-K."/>
            <person name="Codani J.-J."/>
            <person name="Connerton I.F."/>
            <person name="Cummings N.J."/>
            <person name="Daniel R.A."/>
            <person name="Denizot F."/>
            <person name="Devine K.M."/>
            <person name="Duesterhoeft A."/>
            <person name="Ehrlich S.D."/>
            <person name="Emmerson P.T."/>
            <person name="Entian K.-D."/>
            <person name="Errington J."/>
            <person name="Fabret C."/>
            <person name="Ferrari E."/>
            <person name="Foulger D."/>
            <person name="Fritz C."/>
            <person name="Fujita M."/>
            <person name="Fujita Y."/>
            <person name="Fuma S."/>
            <person name="Galizzi A."/>
            <person name="Galleron N."/>
            <person name="Ghim S.-Y."/>
            <person name="Glaser P."/>
            <person name="Goffeau A."/>
            <person name="Golightly E.J."/>
            <person name="Grandi G."/>
            <person name="Guiseppi G."/>
            <person name="Guy B.J."/>
            <person name="Haga K."/>
            <person name="Haiech J."/>
            <person name="Harwood C.R."/>
            <person name="Henaut A."/>
            <person name="Hilbert H."/>
            <person name="Holsappel S."/>
            <person name="Hosono S."/>
            <person name="Hullo M.-F."/>
            <person name="Itaya M."/>
            <person name="Jones L.-M."/>
            <person name="Joris B."/>
            <person name="Karamata D."/>
            <person name="Kasahara Y."/>
            <person name="Klaerr-Blanchard M."/>
            <person name="Klein C."/>
            <person name="Kobayashi Y."/>
            <person name="Koetter P."/>
            <person name="Koningstein G."/>
            <person name="Krogh S."/>
            <person name="Kumano M."/>
            <person name="Kurita K."/>
            <person name="Lapidus A."/>
            <person name="Lardinois S."/>
            <person name="Lauber J."/>
            <person name="Lazarevic V."/>
            <person name="Lee S.-M."/>
            <person name="Levine A."/>
            <person name="Liu H."/>
            <person name="Masuda S."/>
            <person name="Mauel C."/>
            <person name="Medigue C."/>
            <person name="Medina N."/>
            <person name="Mellado R.P."/>
            <person name="Mizuno M."/>
            <person name="Moestl D."/>
            <person name="Nakai S."/>
            <person name="Noback M."/>
            <person name="Noone D."/>
            <person name="O'Reilly M."/>
            <person name="Ogawa K."/>
            <person name="Ogiwara A."/>
            <person name="Oudega B."/>
            <person name="Park S.-H."/>
            <person name="Parro V."/>
            <person name="Pohl T.M."/>
            <person name="Portetelle D."/>
            <person name="Porwollik S."/>
            <person name="Prescott A.M."/>
            <person name="Presecan E."/>
            <person name="Pujic P."/>
            <person name="Purnelle B."/>
            <person name="Rapoport G."/>
            <person name="Rey M."/>
            <person name="Reynolds S."/>
            <person name="Rieger M."/>
            <person name="Rivolta C."/>
            <person name="Rocha E."/>
            <person name="Roche B."/>
            <person name="Rose M."/>
            <person name="Sadaie Y."/>
            <person name="Sato T."/>
            <person name="Scanlan E."/>
            <person name="Schleich S."/>
            <person name="Schroeter R."/>
            <person name="Scoffone F."/>
            <person name="Sekiguchi J."/>
            <person name="Sekowska A."/>
            <person name="Seror S.J."/>
            <person name="Serror P."/>
            <person name="Shin B.-S."/>
            <person name="Soldo B."/>
            <person name="Sorokin A."/>
            <person name="Tacconi E."/>
            <person name="Takagi T."/>
            <person name="Takahashi H."/>
            <person name="Takemaru K."/>
            <person name="Takeuchi M."/>
            <person name="Tamakoshi A."/>
            <person name="Tanaka T."/>
            <person name="Terpstra P."/>
            <person name="Tognoni A."/>
            <person name="Tosato V."/>
            <person name="Uchiyama S."/>
            <person name="Vandenbol M."/>
            <person name="Vannier F."/>
            <person name="Vassarotti A."/>
            <person name="Viari A."/>
            <person name="Wambutt R."/>
            <person name="Wedler E."/>
            <person name="Wedler H."/>
            <person name="Weitzenegger T."/>
            <person name="Winters P."/>
            <person name="Wipat A."/>
            <person name="Yamamoto H."/>
            <person name="Yamane K."/>
            <person name="Yasumoto K."/>
            <person name="Yata K."/>
            <person name="Yoshida K."/>
            <person name="Yoshikawa H.-F."/>
            <person name="Zumstein E."/>
            <person name="Yoshikawa H."/>
            <person name="Danchin A."/>
        </authorList>
    </citation>
    <scope>NUCLEOTIDE SEQUENCE [LARGE SCALE GENOMIC DNA]</scope>
    <source>
        <strain>168</strain>
    </source>
</reference>
<reference key="3">
    <citation type="journal article" date="2009" name="Microbiology">
        <title>From a consortium sequence to a unified sequence: the Bacillus subtilis 168 reference genome a decade later.</title>
        <authorList>
            <person name="Barbe V."/>
            <person name="Cruveiller S."/>
            <person name="Kunst F."/>
            <person name="Lenoble P."/>
            <person name="Meurice G."/>
            <person name="Sekowska A."/>
            <person name="Vallenet D."/>
            <person name="Wang T."/>
            <person name="Moszer I."/>
            <person name="Medigue C."/>
            <person name="Danchin A."/>
        </authorList>
    </citation>
    <scope>SEQUENCE REVISION TO 31</scope>
</reference>
<accession>P94495</accession>
<feature type="chain" id="PRO_0000049640" description="Uncharacterized protein YncE">
    <location>
        <begin position="1"/>
        <end position="153"/>
    </location>
</feature>
<feature type="sequence conflict" description="In Ref. 1; AAB41098." evidence="1" ref="1">
    <original>W</original>
    <variation>C</variation>
    <location>
        <position position="31"/>
    </location>
</feature>
<organism>
    <name type="scientific">Bacillus subtilis (strain 168)</name>
    <dbReference type="NCBI Taxonomy" id="224308"/>
    <lineage>
        <taxon>Bacteria</taxon>
        <taxon>Bacillati</taxon>
        <taxon>Bacillota</taxon>
        <taxon>Bacilli</taxon>
        <taxon>Bacillales</taxon>
        <taxon>Bacillaceae</taxon>
        <taxon>Bacillus</taxon>
    </lineage>
</organism>
<sequence>MNRGVSFQIPNEYGNFLWRILQPVEIANYRWQTSGESYFVVEGELDDEELFHDYEIVEGAVFEQQLKTNQYYTIFVELKAFPYGKMVNQVNTYEEFADSDCELVLLIADNSYVSIYCKNKNIIEKLYFNALQHDFEDVQFITDENDTRTSLTV</sequence>